<proteinExistence type="inferred from homology"/>
<comment type="function">
    <text evidence="1">The RuvA-RuvB-RuvC complex processes Holliday junction (HJ) DNA during genetic recombination and DNA repair. Endonuclease that resolves HJ intermediates. Cleaves cruciform DNA by making single-stranded nicks across the HJ at symmetrical positions within the homologous arms, yielding a 5'-phosphate and a 3'-hydroxyl group; requires a central core of homology in the junction. The consensus cleavage sequence is 5'-(A/T)TT(C/G)-3'. Cleavage occurs on the 3'-side of the TT dinucleotide at the point of strand exchange. HJ branch migration catalyzed by RuvA-RuvB allows RuvC to scan DNA until it finds its consensus sequence, where it cleaves and resolves the cruciform DNA.</text>
</comment>
<comment type="catalytic activity">
    <reaction evidence="1">
        <text>Endonucleolytic cleavage at a junction such as a reciprocal single-stranded crossover between two homologous DNA duplexes (Holliday junction).</text>
        <dbReference type="EC" id="3.1.21.10"/>
    </reaction>
</comment>
<comment type="cofactor">
    <cofactor evidence="1">
        <name>Mg(2+)</name>
        <dbReference type="ChEBI" id="CHEBI:18420"/>
    </cofactor>
    <text evidence="1">Binds 2 Mg(2+) ion per subunit.</text>
</comment>
<comment type="subunit">
    <text evidence="1">Homodimer which binds Holliday junction (HJ) DNA. The HJ becomes 2-fold symmetrical on binding to RuvC with unstacked arms; it has a different conformation from HJ DNA in complex with RuvA. In the full resolvosome a probable DNA-RuvA(4)-RuvB(12)-RuvC(2) complex forms which resolves the HJ.</text>
</comment>
<comment type="subcellular location">
    <subcellularLocation>
        <location evidence="1">Cytoplasm</location>
    </subcellularLocation>
</comment>
<comment type="similarity">
    <text evidence="1">Belongs to the RuvC family.</text>
</comment>
<accession>B2USV3</accession>
<feature type="chain" id="PRO_1000090534" description="Crossover junction endodeoxyribonuclease RuvC">
    <location>
        <begin position="1"/>
        <end position="157"/>
    </location>
</feature>
<feature type="active site" evidence="1">
    <location>
        <position position="7"/>
    </location>
</feature>
<feature type="active site" evidence="1">
    <location>
        <position position="66"/>
    </location>
</feature>
<feature type="active site" evidence="1">
    <location>
        <position position="139"/>
    </location>
</feature>
<feature type="binding site" evidence="1">
    <location>
        <position position="7"/>
    </location>
    <ligand>
        <name>Mg(2+)</name>
        <dbReference type="ChEBI" id="CHEBI:18420"/>
        <label>1</label>
    </ligand>
</feature>
<feature type="binding site" evidence="1">
    <location>
        <position position="66"/>
    </location>
    <ligand>
        <name>Mg(2+)</name>
        <dbReference type="ChEBI" id="CHEBI:18420"/>
        <label>2</label>
    </ligand>
</feature>
<feature type="binding site" evidence="1">
    <location>
        <position position="139"/>
    </location>
    <ligand>
        <name>Mg(2+)</name>
        <dbReference type="ChEBI" id="CHEBI:18420"/>
        <label>1</label>
    </ligand>
</feature>
<dbReference type="EC" id="3.1.21.10" evidence="1"/>
<dbReference type="EMBL" id="CP001072">
    <property type="protein sequence ID" value="ACD47935.1"/>
    <property type="molecule type" value="Genomic_DNA"/>
</dbReference>
<dbReference type="RefSeq" id="WP_001221188.1">
    <property type="nucleotide sequence ID" value="NC_010698.2"/>
</dbReference>
<dbReference type="SMR" id="B2USV3"/>
<dbReference type="KEGG" id="hps:HPSH_02425"/>
<dbReference type="HOGENOM" id="CLU_091257_3_0_7"/>
<dbReference type="GO" id="GO:0005737">
    <property type="term" value="C:cytoplasm"/>
    <property type="evidence" value="ECO:0007669"/>
    <property type="project" value="UniProtKB-SubCell"/>
</dbReference>
<dbReference type="GO" id="GO:0048476">
    <property type="term" value="C:Holliday junction resolvase complex"/>
    <property type="evidence" value="ECO:0007669"/>
    <property type="project" value="UniProtKB-UniRule"/>
</dbReference>
<dbReference type="GO" id="GO:0008821">
    <property type="term" value="F:crossover junction DNA endonuclease activity"/>
    <property type="evidence" value="ECO:0007669"/>
    <property type="project" value="UniProtKB-UniRule"/>
</dbReference>
<dbReference type="GO" id="GO:0003677">
    <property type="term" value="F:DNA binding"/>
    <property type="evidence" value="ECO:0007669"/>
    <property type="project" value="UniProtKB-KW"/>
</dbReference>
<dbReference type="GO" id="GO:0000287">
    <property type="term" value="F:magnesium ion binding"/>
    <property type="evidence" value="ECO:0007669"/>
    <property type="project" value="UniProtKB-UniRule"/>
</dbReference>
<dbReference type="GO" id="GO:0006310">
    <property type="term" value="P:DNA recombination"/>
    <property type="evidence" value="ECO:0007669"/>
    <property type="project" value="UniProtKB-UniRule"/>
</dbReference>
<dbReference type="GO" id="GO:0006281">
    <property type="term" value="P:DNA repair"/>
    <property type="evidence" value="ECO:0007669"/>
    <property type="project" value="UniProtKB-UniRule"/>
</dbReference>
<dbReference type="CDD" id="cd16962">
    <property type="entry name" value="RuvC"/>
    <property type="match status" value="1"/>
</dbReference>
<dbReference type="FunFam" id="3.30.420.10:FF:000002">
    <property type="entry name" value="Crossover junction endodeoxyribonuclease RuvC"/>
    <property type="match status" value="1"/>
</dbReference>
<dbReference type="Gene3D" id="3.30.420.10">
    <property type="entry name" value="Ribonuclease H-like superfamily/Ribonuclease H"/>
    <property type="match status" value="1"/>
</dbReference>
<dbReference type="HAMAP" id="MF_00034">
    <property type="entry name" value="RuvC"/>
    <property type="match status" value="1"/>
</dbReference>
<dbReference type="InterPro" id="IPR012337">
    <property type="entry name" value="RNaseH-like_sf"/>
</dbReference>
<dbReference type="InterPro" id="IPR036397">
    <property type="entry name" value="RNaseH_sf"/>
</dbReference>
<dbReference type="InterPro" id="IPR020563">
    <property type="entry name" value="X-over_junc_endoDNase_Mg_BS"/>
</dbReference>
<dbReference type="InterPro" id="IPR002176">
    <property type="entry name" value="X-over_junc_endoDNase_RuvC"/>
</dbReference>
<dbReference type="NCBIfam" id="TIGR00228">
    <property type="entry name" value="ruvC"/>
    <property type="match status" value="1"/>
</dbReference>
<dbReference type="PANTHER" id="PTHR30194">
    <property type="entry name" value="CROSSOVER JUNCTION ENDODEOXYRIBONUCLEASE RUVC"/>
    <property type="match status" value="1"/>
</dbReference>
<dbReference type="PANTHER" id="PTHR30194:SF3">
    <property type="entry name" value="CROSSOVER JUNCTION ENDODEOXYRIBONUCLEASE RUVC"/>
    <property type="match status" value="1"/>
</dbReference>
<dbReference type="Pfam" id="PF02075">
    <property type="entry name" value="RuvC"/>
    <property type="match status" value="1"/>
</dbReference>
<dbReference type="PRINTS" id="PR00696">
    <property type="entry name" value="RSOLVASERUVC"/>
</dbReference>
<dbReference type="SUPFAM" id="SSF53098">
    <property type="entry name" value="Ribonuclease H-like"/>
    <property type="match status" value="1"/>
</dbReference>
<dbReference type="PROSITE" id="PS01321">
    <property type="entry name" value="RUVC"/>
    <property type="match status" value="1"/>
</dbReference>
<name>RUVC_HELPS</name>
<keyword id="KW-0963">Cytoplasm</keyword>
<keyword id="KW-0227">DNA damage</keyword>
<keyword id="KW-0233">DNA recombination</keyword>
<keyword id="KW-0234">DNA repair</keyword>
<keyword id="KW-0238">DNA-binding</keyword>
<keyword id="KW-0255">Endonuclease</keyword>
<keyword id="KW-0378">Hydrolase</keyword>
<keyword id="KW-0460">Magnesium</keyword>
<keyword id="KW-0479">Metal-binding</keyword>
<keyword id="KW-0540">Nuclease</keyword>
<protein>
    <recommendedName>
        <fullName evidence="1">Crossover junction endodeoxyribonuclease RuvC</fullName>
        <ecNumber evidence="1">3.1.21.10</ecNumber>
    </recommendedName>
    <alternativeName>
        <fullName evidence="1">Holliday junction nuclease RuvC</fullName>
    </alternativeName>
    <alternativeName>
        <fullName evidence="1">Holliday junction resolvase RuvC</fullName>
    </alternativeName>
</protein>
<sequence>MRILGIDPGSRKCGYAIVSHTSNKLSLITAGFINITTTRLQEQILDLIEALDCLLDRYEVHEVAIEDIFFGYNPKSVIKLAQFRGALSLKILERIGNFSEYTPLQVKKALTGNGKAAKEQVAFMVKRLLNITSEIKPLDISDAIAVAITHAQRLKPH</sequence>
<organism>
    <name type="scientific">Helicobacter pylori (strain Shi470)</name>
    <dbReference type="NCBI Taxonomy" id="512562"/>
    <lineage>
        <taxon>Bacteria</taxon>
        <taxon>Pseudomonadati</taxon>
        <taxon>Campylobacterota</taxon>
        <taxon>Epsilonproteobacteria</taxon>
        <taxon>Campylobacterales</taxon>
        <taxon>Helicobacteraceae</taxon>
        <taxon>Helicobacter</taxon>
    </lineage>
</organism>
<reference key="1">
    <citation type="submission" date="2008-05" db="EMBL/GenBank/DDBJ databases">
        <title>Genome sequence of Helicobacter pylori from the remote Amazon: traces of Asian ancestry of the first Americans.</title>
        <authorList>
            <person name="Kersulyte D."/>
            <person name="Kalia A."/>
            <person name="Gilman R.H."/>
            <person name="Berg D.E."/>
        </authorList>
    </citation>
    <scope>NUCLEOTIDE SEQUENCE [LARGE SCALE GENOMIC DNA]</scope>
    <source>
        <strain>Shi470</strain>
    </source>
</reference>
<evidence type="ECO:0000255" key="1">
    <source>
        <dbReference type="HAMAP-Rule" id="MF_00034"/>
    </source>
</evidence>
<gene>
    <name evidence="1" type="primary">ruvC</name>
    <name type="ordered locus">HPSH_02425</name>
</gene>